<dbReference type="EC" id="2.7.1.33" evidence="1"/>
<dbReference type="EMBL" id="CP000746">
    <property type="protein sequence ID" value="ABR73475.1"/>
    <property type="molecule type" value="Genomic_DNA"/>
</dbReference>
<dbReference type="RefSeq" id="WP_011978751.1">
    <property type="nucleotide sequence ID" value="NC_009655.1"/>
</dbReference>
<dbReference type="SMR" id="A6VKH8"/>
<dbReference type="STRING" id="339671.Asuc_0095"/>
<dbReference type="KEGG" id="asu:Asuc_0095"/>
<dbReference type="eggNOG" id="COG1072">
    <property type="taxonomic scope" value="Bacteria"/>
</dbReference>
<dbReference type="HOGENOM" id="CLU_053818_1_1_6"/>
<dbReference type="OrthoDB" id="1550976at2"/>
<dbReference type="UniPathway" id="UPA00241">
    <property type="reaction ID" value="UER00352"/>
</dbReference>
<dbReference type="Proteomes" id="UP000001114">
    <property type="component" value="Chromosome"/>
</dbReference>
<dbReference type="GO" id="GO:0005737">
    <property type="term" value="C:cytoplasm"/>
    <property type="evidence" value="ECO:0007669"/>
    <property type="project" value="UniProtKB-SubCell"/>
</dbReference>
<dbReference type="GO" id="GO:0005524">
    <property type="term" value="F:ATP binding"/>
    <property type="evidence" value="ECO:0007669"/>
    <property type="project" value="UniProtKB-UniRule"/>
</dbReference>
<dbReference type="GO" id="GO:0004594">
    <property type="term" value="F:pantothenate kinase activity"/>
    <property type="evidence" value="ECO:0007669"/>
    <property type="project" value="UniProtKB-UniRule"/>
</dbReference>
<dbReference type="GO" id="GO:0015937">
    <property type="term" value="P:coenzyme A biosynthetic process"/>
    <property type="evidence" value="ECO:0007669"/>
    <property type="project" value="UniProtKB-UniRule"/>
</dbReference>
<dbReference type="CDD" id="cd02025">
    <property type="entry name" value="PanK"/>
    <property type="match status" value="1"/>
</dbReference>
<dbReference type="FunFam" id="3.40.50.300:FF:000242">
    <property type="entry name" value="Pantothenate kinase"/>
    <property type="match status" value="1"/>
</dbReference>
<dbReference type="Gene3D" id="3.40.50.300">
    <property type="entry name" value="P-loop containing nucleotide triphosphate hydrolases"/>
    <property type="match status" value="1"/>
</dbReference>
<dbReference type="HAMAP" id="MF_00215">
    <property type="entry name" value="Pantothen_kinase_1"/>
    <property type="match status" value="1"/>
</dbReference>
<dbReference type="InterPro" id="IPR027417">
    <property type="entry name" value="P-loop_NTPase"/>
</dbReference>
<dbReference type="InterPro" id="IPR004566">
    <property type="entry name" value="PanK"/>
</dbReference>
<dbReference type="InterPro" id="IPR006083">
    <property type="entry name" value="PRK/URK"/>
</dbReference>
<dbReference type="NCBIfam" id="TIGR00554">
    <property type="entry name" value="panK_bact"/>
    <property type="match status" value="1"/>
</dbReference>
<dbReference type="PANTHER" id="PTHR10285">
    <property type="entry name" value="URIDINE KINASE"/>
    <property type="match status" value="1"/>
</dbReference>
<dbReference type="Pfam" id="PF00485">
    <property type="entry name" value="PRK"/>
    <property type="match status" value="1"/>
</dbReference>
<dbReference type="PIRSF" id="PIRSF000545">
    <property type="entry name" value="Pantothenate_kin"/>
    <property type="match status" value="1"/>
</dbReference>
<dbReference type="SUPFAM" id="SSF52540">
    <property type="entry name" value="P-loop containing nucleoside triphosphate hydrolases"/>
    <property type="match status" value="1"/>
</dbReference>
<gene>
    <name evidence="1" type="primary">coaA</name>
    <name type="ordered locus">Asuc_0095</name>
</gene>
<name>COAA_ACTSZ</name>
<keyword id="KW-0067">ATP-binding</keyword>
<keyword id="KW-0173">Coenzyme A biosynthesis</keyword>
<keyword id="KW-0963">Cytoplasm</keyword>
<keyword id="KW-0418">Kinase</keyword>
<keyword id="KW-0547">Nucleotide-binding</keyword>
<keyword id="KW-1185">Reference proteome</keyword>
<keyword id="KW-0808">Transferase</keyword>
<sequence length="317" mass="36145">MNAKIVNTLNQPPIAGPFLVFNRLQWAELRKSVPLTLTEQDLKPLLGINEELSLDEVSTIYLPLVRLINYYIEENLRRQTVLNRFLGGQHPKVPYIISIAGSVAVGKSTSARILQSLLANWPQARKVDLITTDGFLYPLADLQEKNLLQKKGFPVSYDTPKLIQFLADIKSGKPHVKAPIYSHLTYDIIPNRFNLVNQPDILILEGLNVLQTGNKAKTFVSDFVDFSVYVDADEALLREWYIRRFLKFRQSAFNNPHSYFKHYASLSEQDAINTATNIWDTINGLNLKQNILPTRERANLILHKGADHAVQEVKLRK</sequence>
<reference key="1">
    <citation type="journal article" date="2010" name="BMC Genomics">
        <title>A genomic perspective on the potential of Actinobacillus succinogenes for industrial succinate production.</title>
        <authorList>
            <person name="McKinlay J.B."/>
            <person name="Laivenieks M."/>
            <person name="Schindler B.D."/>
            <person name="McKinlay A.A."/>
            <person name="Siddaramappa S."/>
            <person name="Challacombe J.F."/>
            <person name="Lowry S.R."/>
            <person name="Clum A."/>
            <person name="Lapidus A.L."/>
            <person name="Burkhart K.B."/>
            <person name="Harkins V."/>
            <person name="Vieille C."/>
        </authorList>
    </citation>
    <scope>NUCLEOTIDE SEQUENCE [LARGE SCALE GENOMIC DNA]</scope>
    <source>
        <strain>ATCC 55618 / DSM 22257 / CCUG 43843 / 130Z</strain>
    </source>
</reference>
<evidence type="ECO:0000255" key="1">
    <source>
        <dbReference type="HAMAP-Rule" id="MF_00215"/>
    </source>
</evidence>
<proteinExistence type="inferred from homology"/>
<comment type="catalytic activity">
    <reaction evidence="1">
        <text>(R)-pantothenate + ATP = (R)-4'-phosphopantothenate + ADP + H(+)</text>
        <dbReference type="Rhea" id="RHEA:16373"/>
        <dbReference type="ChEBI" id="CHEBI:10986"/>
        <dbReference type="ChEBI" id="CHEBI:15378"/>
        <dbReference type="ChEBI" id="CHEBI:29032"/>
        <dbReference type="ChEBI" id="CHEBI:30616"/>
        <dbReference type="ChEBI" id="CHEBI:456216"/>
        <dbReference type="EC" id="2.7.1.33"/>
    </reaction>
</comment>
<comment type="pathway">
    <text evidence="1">Cofactor biosynthesis; coenzyme A biosynthesis; CoA from (R)-pantothenate: step 1/5.</text>
</comment>
<comment type="subcellular location">
    <subcellularLocation>
        <location evidence="1">Cytoplasm</location>
    </subcellularLocation>
</comment>
<comment type="similarity">
    <text evidence="1">Belongs to the prokaryotic pantothenate kinase family.</text>
</comment>
<feature type="chain" id="PRO_0000325541" description="Pantothenate kinase">
    <location>
        <begin position="1"/>
        <end position="317"/>
    </location>
</feature>
<feature type="binding site" evidence="1">
    <location>
        <begin position="101"/>
        <end position="108"/>
    </location>
    <ligand>
        <name>ATP</name>
        <dbReference type="ChEBI" id="CHEBI:30616"/>
    </ligand>
</feature>
<protein>
    <recommendedName>
        <fullName evidence="1">Pantothenate kinase</fullName>
        <ecNumber evidence="1">2.7.1.33</ecNumber>
    </recommendedName>
    <alternativeName>
        <fullName evidence="1">Pantothenic acid kinase</fullName>
    </alternativeName>
</protein>
<accession>A6VKH8</accession>
<organism>
    <name type="scientific">Actinobacillus succinogenes (strain ATCC 55618 / DSM 22257 / CCUG 43843 / 130Z)</name>
    <dbReference type="NCBI Taxonomy" id="339671"/>
    <lineage>
        <taxon>Bacteria</taxon>
        <taxon>Pseudomonadati</taxon>
        <taxon>Pseudomonadota</taxon>
        <taxon>Gammaproteobacteria</taxon>
        <taxon>Pasteurellales</taxon>
        <taxon>Pasteurellaceae</taxon>
        <taxon>Actinobacillus</taxon>
    </lineage>
</organism>